<sequence length="387" mass="42018">MKALHFGAGNIGRGFIGKLLADAGAQLTFADVNQPLLDELNKRKRYQVNVVGEQARVEEVKNVSAVNSGSPEVVALIAEADIVTTAVGPQILARIAATVAQGLITRHQQGNTRPLNIIACENMVRGTSQLKQHVFAALSEDEQIWVEQHVGFVDSAVDRIVPPSEAGSTDILAVTVETFSEWIVDGTQFKGQPPEIVGMELTDNLMAFVERKLFTLNTGHAITAYLGQLAGHQTIRDAILDPAVRQTVKGAMEESGAVLIKRYAFDPQKHAAYINKILSRFENPYLHDDVERVGRQPLRKLSAGDRLIKPLLGTLEYQLPHDSLVTGIAAAMSYRSEQDPQAQELVTLLAQLGPKAALAQISGLPADSEVVEQAVSVYNAMQQKLAH</sequence>
<protein>
    <recommendedName>
        <fullName evidence="1">Mannitol-1-phosphate 5-dehydrogenase</fullName>
        <ecNumber evidence="1">1.1.1.17</ecNumber>
    </recommendedName>
</protein>
<accession>Q1CD89</accession>
<accession>D1Q265</accession>
<evidence type="ECO:0000255" key="1">
    <source>
        <dbReference type="HAMAP-Rule" id="MF_00196"/>
    </source>
</evidence>
<proteinExistence type="inferred from homology"/>
<feature type="chain" id="PRO_1000011822" description="Mannitol-1-phosphate 5-dehydrogenase">
    <location>
        <begin position="1"/>
        <end position="387"/>
    </location>
</feature>
<feature type="binding site" evidence="1">
    <location>
        <begin position="3"/>
        <end position="14"/>
    </location>
    <ligand>
        <name>NAD(+)</name>
        <dbReference type="ChEBI" id="CHEBI:57540"/>
    </ligand>
</feature>
<reference key="1">
    <citation type="journal article" date="2006" name="J. Bacteriol.">
        <title>Complete genome sequence of Yersinia pestis strains Antiqua and Nepal516: evidence of gene reduction in an emerging pathogen.</title>
        <authorList>
            <person name="Chain P.S.G."/>
            <person name="Hu P."/>
            <person name="Malfatti S.A."/>
            <person name="Radnedge L."/>
            <person name="Larimer F."/>
            <person name="Vergez L.M."/>
            <person name="Worsham P."/>
            <person name="Chu M.C."/>
            <person name="Andersen G.L."/>
        </authorList>
    </citation>
    <scope>NUCLEOTIDE SEQUENCE [LARGE SCALE GENOMIC DNA]</scope>
    <source>
        <strain>Nepal516</strain>
    </source>
</reference>
<reference key="2">
    <citation type="submission" date="2009-04" db="EMBL/GenBank/DDBJ databases">
        <title>Yersinia pestis Nepal516A whole genome shotgun sequencing project.</title>
        <authorList>
            <person name="Plunkett G. III"/>
            <person name="Anderson B.D."/>
            <person name="Baumler D.J."/>
            <person name="Burland V."/>
            <person name="Cabot E.L."/>
            <person name="Glasner J.D."/>
            <person name="Mau B."/>
            <person name="Neeno-Eckwall E."/>
            <person name="Perna N.T."/>
            <person name="Munk A.C."/>
            <person name="Tapia R."/>
            <person name="Green L.D."/>
            <person name="Rogers Y.C."/>
            <person name="Detter J.C."/>
            <person name="Bruce D.C."/>
            <person name="Brettin T.S."/>
        </authorList>
    </citation>
    <scope>NUCLEOTIDE SEQUENCE [LARGE SCALE GENOMIC DNA]</scope>
    <source>
        <strain>Nepal516</strain>
    </source>
</reference>
<organism>
    <name type="scientific">Yersinia pestis bv. Antiqua (strain Nepal516)</name>
    <dbReference type="NCBI Taxonomy" id="377628"/>
    <lineage>
        <taxon>Bacteria</taxon>
        <taxon>Pseudomonadati</taxon>
        <taxon>Pseudomonadota</taxon>
        <taxon>Gammaproteobacteria</taxon>
        <taxon>Enterobacterales</taxon>
        <taxon>Yersiniaceae</taxon>
        <taxon>Yersinia</taxon>
    </lineage>
</organism>
<dbReference type="EC" id="1.1.1.17" evidence="1"/>
<dbReference type="EMBL" id="CP000305">
    <property type="protein sequence ID" value="ABG20041.1"/>
    <property type="molecule type" value="Genomic_DNA"/>
</dbReference>
<dbReference type="EMBL" id="ACNQ01000019">
    <property type="protein sequence ID" value="EEO74618.1"/>
    <property type="molecule type" value="Genomic_DNA"/>
</dbReference>
<dbReference type="RefSeq" id="WP_002209620.1">
    <property type="nucleotide sequence ID" value="NZ_ACNQ01000019.1"/>
</dbReference>
<dbReference type="SMR" id="Q1CD89"/>
<dbReference type="KEGG" id="ypn:YPN_3714"/>
<dbReference type="HOGENOM" id="CLU_036089_2_0_6"/>
<dbReference type="Proteomes" id="UP000008936">
    <property type="component" value="Chromosome"/>
</dbReference>
<dbReference type="GO" id="GO:0005829">
    <property type="term" value="C:cytosol"/>
    <property type="evidence" value="ECO:0007669"/>
    <property type="project" value="TreeGrafter"/>
</dbReference>
<dbReference type="GO" id="GO:0008926">
    <property type="term" value="F:mannitol-1-phosphate 5-dehydrogenase activity"/>
    <property type="evidence" value="ECO:0007669"/>
    <property type="project" value="UniProtKB-UniRule"/>
</dbReference>
<dbReference type="GO" id="GO:0019592">
    <property type="term" value="P:mannitol catabolic process"/>
    <property type="evidence" value="ECO:0007669"/>
    <property type="project" value="TreeGrafter"/>
</dbReference>
<dbReference type="FunFam" id="1.10.1040.10:FF:000009">
    <property type="entry name" value="Mannitol-1-phosphate 5-dehydrogenase"/>
    <property type="match status" value="1"/>
</dbReference>
<dbReference type="FunFam" id="3.40.50.720:FF:000075">
    <property type="entry name" value="Mannitol-1-phosphate 5-dehydrogenase"/>
    <property type="match status" value="1"/>
</dbReference>
<dbReference type="Gene3D" id="1.10.1040.10">
    <property type="entry name" value="N-(1-d-carboxylethyl)-l-norvaline Dehydrogenase, domain 2"/>
    <property type="match status" value="1"/>
</dbReference>
<dbReference type="Gene3D" id="3.40.50.720">
    <property type="entry name" value="NAD(P)-binding Rossmann-like Domain"/>
    <property type="match status" value="1"/>
</dbReference>
<dbReference type="HAMAP" id="MF_00196">
    <property type="entry name" value="Mannitol_dehydrog"/>
    <property type="match status" value="1"/>
</dbReference>
<dbReference type="InterPro" id="IPR008927">
    <property type="entry name" value="6-PGluconate_DH-like_C_sf"/>
</dbReference>
<dbReference type="InterPro" id="IPR013328">
    <property type="entry name" value="6PGD_dom2"/>
</dbReference>
<dbReference type="InterPro" id="IPR023028">
    <property type="entry name" value="Mannitol_1_phos_5_DH"/>
</dbReference>
<dbReference type="InterPro" id="IPR000669">
    <property type="entry name" value="Mannitol_DH"/>
</dbReference>
<dbReference type="InterPro" id="IPR013118">
    <property type="entry name" value="Mannitol_DH_C"/>
</dbReference>
<dbReference type="InterPro" id="IPR023027">
    <property type="entry name" value="Mannitol_DH_CS"/>
</dbReference>
<dbReference type="InterPro" id="IPR013131">
    <property type="entry name" value="Mannitol_DH_N"/>
</dbReference>
<dbReference type="InterPro" id="IPR036291">
    <property type="entry name" value="NAD(P)-bd_dom_sf"/>
</dbReference>
<dbReference type="NCBIfam" id="NF002646">
    <property type="entry name" value="PRK02318.1-2"/>
    <property type="match status" value="1"/>
</dbReference>
<dbReference type="NCBIfam" id="NF002647">
    <property type="entry name" value="PRK02318.1-3"/>
    <property type="match status" value="1"/>
</dbReference>
<dbReference type="NCBIfam" id="NF002650">
    <property type="entry name" value="PRK02318.2-2"/>
    <property type="match status" value="1"/>
</dbReference>
<dbReference type="NCBIfam" id="NF002652">
    <property type="entry name" value="PRK02318.2-5"/>
    <property type="match status" value="1"/>
</dbReference>
<dbReference type="PANTHER" id="PTHR30524:SF0">
    <property type="entry name" value="ALTRONATE OXIDOREDUCTASE-RELATED"/>
    <property type="match status" value="1"/>
</dbReference>
<dbReference type="PANTHER" id="PTHR30524">
    <property type="entry name" value="MANNITOL-1-PHOSPHATE 5-DEHYDROGENASE"/>
    <property type="match status" value="1"/>
</dbReference>
<dbReference type="Pfam" id="PF01232">
    <property type="entry name" value="Mannitol_dh"/>
    <property type="match status" value="1"/>
</dbReference>
<dbReference type="Pfam" id="PF08125">
    <property type="entry name" value="Mannitol_dh_C"/>
    <property type="match status" value="1"/>
</dbReference>
<dbReference type="PRINTS" id="PR00084">
    <property type="entry name" value="MTLDHDRGNASE"/>
</dbReference>
<dbReference type="SUPFAM" id="SSF48179">
    <property type="entry name" value="6-phosphogluconate dehydrogenase C-terminal domain-like"/>
    <property type="match status" value="1"/>
</dbReference>
<dbReference type="SUPFAM" id="SSF51735">
    <property type="entry name" value="NAD(P)-binding Rossmann-fold domains"/>
    <property type="match status" value="1"/>
</dbReference>
<dbReference type="PROSITE" id="PS00974">
    <property type="entry name" value="MANNITOL_DHGENASE"/>
    <property type="match status" value="1"/>
</dbReference>
<name>MTLD_YERPN</name>
<keyword id="KW-0520">NAD</keyword>
<keyword id="KW-0560">Oxidoreductase</keyword>
<comment type="catalytic activity">
    <reaction evidence="1">
        <text>D-mannitol 1-phosphate + NAD(+) = beta-D-fructose 6-phosphate + NADH + H(+)</text>
        <dbReference type="Rhea" id="RHEA:19661"/>
        <dbReference type="ChEBI" id="CHEBI:15378"/>
        <dbReference type="ChEBI" id="CHEBI:57540"/>
        <dbReference type="ChEBI" id="CHEBI:57634"/>
        <dbReference type="ChEBI" id="CHEBI:57945"/>
        <dbReference type="ChEBI" id="CHEBI:61381"/>
        <dbReference type="EC" id="1.1.1.17"/>
    </reaction>
</comment>
<comment type="similarity">
    <text evidence="1">Belongs to the mannitol dehydrogenase family.</text>
</comment>
<gene>
    <name evidence="1" type="primary">mtlD</name>
    <name type="ordered locus">YPN_3714</name>
    <name type="ORF">YP516_4221</name>
</gene>